<sequence>MKVRSSVKKMCDKCRVIRRHGKVMVICANPKHKQRQG</sequence>
<organism>
    <name type="scientific">Synechococcus sp. (strain CC9605)</name>
    <dbReference type="NCBI Taxonomy" id="110662"/>
    <lineage>
        <taxon>Bacteria</taxon>
        <taxon>Bacillati</taxon>
        <taxon>Cyanobacteriota</taxon>
        <taxon>Cyanophyceae</taxon>
        <taxon>Synechococcales</taxon>
        <taxon>Synechococcaceae</taxon>
        <taxon>Synechococcus</taxon>
    </lineage>
</organism>
<proteinExistence type="inferred from homology"/>
<dbReference type="EMBL" id="CP000110">
    <property type="protein sequence ID" value="ABB34132.1"/>
    <property type="molecule type" value="Genomic_DNA"/>
</dbReference>
<dbReference type="RefSeq" id="WP_006850859.1">
    <property type="nucleotide sequence ID" value="NC_007516.1"/>
</dbReference>
<dbReference type="SMR" id="Q3AMQ0"/>
<dbReference type="STRING" id="110662.Syncc9605_0356"/>
<dbReference type="KEGG" id="syd:Syncc9605_0356"/>
<dbReference type="eggNOG" id="COG0257">
    <property type="taxonomic scope" value="Bacteria"/>
</dbReference>
<dbReference type="HOGENOM" id="CLU_135723_6_2_3"/>
<dbReference type="OrthoDB" id="9802520at2"/>
<dbReference type="GO" id="GO:0005737">
    <property type="term" value="C:cytoplasm"/>
    <property type="evidence" value="ECO:0007669"/>
    <property type="project" value="UniProtKB-ARBA"/>
</dbReference>
<dbReference type="GO" id="GO:1990904">
    <property type="term" value="C:ribonucleoprotein complex"/>
    <property type="evidence" value="ECO:0007669"/>
    <property type="project" value="UniProtKB-KW"/>
</dbReference>
<dbReference type="GO" id="GO:0005840">
    <property type="term" value="C:ribosome"/>
    <property type="evidence" value="ECO:0007669"/>
    <property type="project" value="UniProtKB-KW"/>
</dbReference>
<dbReference type="GO" id="GO:0003735">
    <property type="term" value="F:structural constituent of ribosome"/>
    <property type="evidence" value="ECO:0007669"/>
    <property type="project" value="InterPro"/>
</dbReference>
<dbReference type="GO" id="GO:0006412">
    <property type="term" value="P:translation"/>
    <property type="evidence" value="ECO:0007669"/>
    <property type="project" value="UniProtKB-UniRule"/>
</dbReference>
<dbReference type="HAMAP" id="MF_00251">
    <property type="entry name" value="Ribosomal_bL36"/>
    <property type="match status" value="1"/>
</dbReference>
<dbReference type="InterPro" id="IPR000473">
    <property type="entry name" value="Ribosomal_bL36"/>
</dbReference>
<dbReference type="InterPro" id="IPR035977">
    <property type="entry name" value="Ribosomal_bL36_sp"/>
</dbReference>
<dbReference type="NCBIfam" id="TIGR01022">
    <property type="entry name" value="rpmJ_bact"/>
    <property type="match status" value="1"/>
</dbReference>
<dbReference type="PANTHER" id="PTHR42888">
    <property type="entry name" value="50S RIBOSOMAL PROTEIN L36, CHLOROPLASTIC"/>
    <property type="match status" value="1"/>
</dbReference>
<dbReference type="PANTHER" id="PTHR42888:SF1">
    <property type="entry name" value="LARGE RIBOSOMAL SUBUNIT PROTEIN BL36C"/>
    <property type="match status" value="1"/>
</dbReference>
<dbReference type="Pfam" id="PF00444">
    <property type="entry name" value="Ribosomal_L36"/>
    <property type="match status" value="1"/>
</dbReference>
<dbReference type="SUPFAM" id="SSF57840">
    <property type="entry name" value="Ribosomal protein L36"/>
    <property type="match status" value="1"/>
</dbReference>
<dbReference type="PROSITE" id="PS00828">
    <property type="entry name" value="RIBOSOMAL_L36"/>
    <property type="match status" value="1"/>
</dbReference>
<comment type="similarity">
    <text evidence="1">Belongs to the bacterial ribosomal protein bL36 family.</text>
</comment>
<evidence type="ECO:0000255" key="1">
    <source>
        <dbReference type="HAMAP-Rule" id="MF_00251"/>
    </source>
</evidence>
<evidence type="ECO:0000305" key="2"/>
<reference key="1">
    <citation type="submission" date="2005-07" db="EMBL/GenBank/DDBJ databases">
        <title>Complete sequence of Synechococcus sp. CC9605.</title>
        <authorList>
            <consortium name="US DOE Joint Genome Institute"/>
            <person name="Copeland A."/>
            <person name="Lucas S."/>
            <person name="Lapidus A."/>
            <person name="Barry K."/>
            <person name="Detter J.C."/>
            <person name="Glavina T."/>
            <person name="Hammon N."/>
            <person name="Israni S."/>
            <person name="Pitluck S."/>
            <person name="Schmutz J."/>
            <person name="Martinez M."/>
            <person name="Larimer F."/>
            <person name="Land M."/>
            <person name="Kyrpides N."/>
            <person name="Ivanova N."/>
            <person name="Richardson P."/>
        </authorList>
    </citation>
    <scope>NUCLEOTIDE SEQUENCE [LARGE SCALE GENOMIC DNA]</scope>
    <source>
        <strain>CC9605</strain>
    </source>
</reference>
<gene>
    <name evidence="1" type="primary">rpmJ</name>
    <name type="ordered locus">Syncc9605_0356</name>
</gene>
<keyword id="KW-0687">Ribonucleoprotein</keyword>
<keyword id="KW-0689">Ribosomal protein</keyword>
<accession>Q3AMQ0</accession>
<name>RL36_SYNSC</name>
<protein>
    <recommendedName>
        <fullName evidence="1">Large ribosomal subunit protein bL36</fullName>
    </recommendedName>
    <alternativeName>
        <fullName evidence="2">50S ribosomal protein L36</fullName>
    </alternativeName>
</protein>
<feature type="chain" id="PRO_0000302318" description="Large ribosomal subunit protein bL36">
    <location>
        <begin position="1"/>
        <end position="37"/>
    </location>
</feature>